<name>RL18_THET8</name>
<keyword id="KW-0002">3D-structure</keyword>
<keyword id="KW-0903">Direct protein sequencing</keyword>
<keyword id="KW-1185">Reference proteome</keyword>
<keyword id="KW-0687">Ribonucleoprotein</keyword>
<keyword id="KW-0689">Ribosomal protein</keyword>
<keyword id="KW-0694">RNA-binding</keyword>
<keyword id="KW-0699">rRNA-binding</keyword>
<evidence type="ECO:0000269" key="1">
    <source>
    </source>
</evidence>
<evidence type="ECO:0000269" key="2">
    <source>
    </source>
</evidence>
<evidence type="ECO:0000269" key="3">
    <source ref="2"/>
</evidence>
<evidence type="ECO:0000269" key="4">
    <source ref="3"/>
</evidence>
<evidence type="ECO:0000303" key="5">
    <source ref="2"/>
</evidence>
<evidence type="ECO:0000305" key="6"/>
<evidence type="ECO:0007829" key="7">
    <source>
        <dbReference type="PDB" id="4WT8"/>
    </source>
</evidence>
<reference key="1">
    <citation type="submission" date="2004-11" db="EMBL/GenBank/DDBJ databases">
        <title>Complete genome sequence of Thermus thermophilus HB8.</title>
        <authorList>
            <person name="Masui R."/>
            <person name="Kurokawa K."/>
            <person name="Nakagawa N."/>
            <person name="Tokunaga F."/>
            <person name="Koyama Y."/>
            <person name="Shibata T."/>
            <person name="Oshima T."/>
            <person name="Yokoyama S."/>
            <person name="Yasunaga T."/>
            <person name="Kuramitsu S."/>
        </authorList>
    </citation>
    <scope>NUCLEOTIDE SEQUENCE [LARGE SCALE GENOMIC DNA]</scope>
    <source>
        <strain>ATCC 27634 / DSM 579 / HB8</strain>
    </source>
</reference>
<reference key="2">
    <citation type="journal article" date="1996" name="Endocyt. Cell Res.">
        <title>Identification, purification and partial sequence of four Thermus thermophilus 5S rRNA binding proteins.</title>
        <authorList>
            <person name="Kim J.-S."/>
            <person name="Boysen R.I."/>
            <person name="Schroeder W."/>
            <person name="Erdmann V.A."/>
            <person name="Gessner R.V."/>
        </authorList>
    </citation>
    <scope>PROTEIN SEQUENCE OF 2-24</scope>
    <scope>ISOLATION OF 5S RRNA-ASSOCIATED COMPLEXES</scope>
</reference>
<reference key="3">
    <citation type="journal article" date="1995" name="Endocyt. Cell Res.">
        <title>The isolation and complete amino acid sequence of the ribosomal protein L36 from Thermus thermophilus and its zinc-binding motif.</title>
        <authorList>
            <person name="Boysen R.I."/>
            <person name="Lorenz S."/>
            <person name="Kim J.S."/>
            <person name="Schroeder W.F.K.J."/>
            <person name="Erdmann V.A."/>
        </authorList>
    </citation>
    <scope>PROTEIN SEQUENCE OF 2-19</scope>
</reference>
<reference key="4">
    <citation type="journal article" date="2000" name="Biol. Chem.">
        <title>Identification of the 50S ribosomal proteins from the eubacterium Thermus thermophilus.</title>
        <authorList>
            <person name="Katsani K.R."/>
            <person name="Tsiboli P."/>
            <person name="Anagnostopoulos K."/>
            <person name="Urlaub H."/>
            <person name="Choli-Papadopoulou T."/>
        </authorList>
    </citation>
    <scope>PROTEIN SEQUENCE OF 2-16</scope>
    <source>
        <strain>ATCC 27634 / DSM 579 / HB8</strain>
    </source>
</reference>
<reference key="5">
    <citation type="journal article" date="2005" name="Proteomics">
        <title>Extending ribosomal protein identifications to unsequenced bacterial strains using matrix-assisted laser desorption/ionization mass spectrometry.</title>
        <authorList>
            <person name="Suh M.-J."/>
            <person name="Hamburg D.M."/>
            <person name="Gregory S.T."/>
            <person name="Dahlberg A.E."/>
            <person name="Limbach P.A."/>
        </authorList>
    </citation>
    <scope>MASS SPECTROMETRY</scope>
    <source>
        <strain>ATCC 27634 / DSM 579 / HB8</strain>
    </source>
</reference>
<reference key="6">
    <citation type="journal article" date="2001" name="Cell">
        <title>The path of messenger RNA through the ribosome.</title>
        <authorList>
            <person name="Yusupova G.Z."/>
            <person name="Yusupov M.M."/>
            <person name="Cate J.H.D."/>
            <person name="Noller H.F."/>
        </authorList>
    </citation>
    <scope>X-RAY CRYSTALLOGRAPHY (5.0 ANGSTROMS) OF THE RIBOSOME</scope>
</reference>
<reference key="7">
    <citation type="journal article" date="2001" name="Science">
        <title>Crystal structure of the ribosome at 5.5 A resolution.</title>
        <authorList>
            <person name="Yusupov M.M."/>
            <person name="Yusupova G.Z."/>
            <person name="Baucom A."/>
            <person name="Lieberman K."/>
            <person name="Earnest T.N."/>
            <person name="Cate J.H.D."/>
            <person name="Noller H.F."/>
        </authorList>
    </citation>
    <scope>X-RAY CRYSTALLOGRAPHY (5.5 ANGSTROMS) OF THE RIBOSOME</scope>
</reference>
<reference key="8">
    <citation type="journal article" date="2008" name="Science">
        <title>Insights into translational termination from the structure of RF2 bound to the ribosome.</title>
        <authorList>
            <person name="Weixlbaumer A."/>
            <person name="Jin H."/>
            <person name="Neubauer C."/>
            <person name="Voorhees R.M."/>
            <person name="Petry S."/>
            <person name="Kelley A.C."/>
            <person name="Ramakrishnan V."/>
        </authorList>
    </citation>
    <scope>X-RAY CRYSTALLOGRAPHY (3.45 ANGSTROMS) OF 70S RIBOSOME IN COMPLEX WITH RF2</scope>
    <scope>SUBUNIT</scope>
</reference>
<reference key="9">
    <citation type="journal article" date="2010" name="Proc. Natl. Acad. Sci. U.S.A.">
        <title>Structure of the 70S ribosome bound to release factor 2 and a substrate analog provides insights into catalysis of peptide release.</title>
        <authorList>
            <person name="Jin H."/>
            <person name="Kelley A.C."/>
            <person name="Loakes D."/>
            <person name="Ramakrishnan V."/>
        </authorList>
    </citation>
    <scope>X-RAY CRYSTALLOGRAPHY (3.10 ANGSTROMS) OF 70S RIBOSOME IN COMPLEX WITH RF2</scope>
    <scope>SUBUNIT</scope>
</reference>
<comment type="function">
    <text evidence="3">This is one of the proteins that bind and probably mediate the attachment of the 5S RNA into the large ribosomal subunit, where it forms part of the central protuberance.</text>
</comment>
<comment type="subunit">
    <text evidence="5">Part of the 50S ribosomal subunit; part of the 5S rRNA/uL5/uL18/bL25 subcomplex. Contacts the 5S and probably the 23S rRNA; has been isolated in a complex with the 5S rRNA and uL25 (Ref.2).</text>
</comment>
<comment type="mass spectrometry"/>
<comment type="similarity">
    <text evidence="6">Belongs to the universal ribosomal protein uL18 family.</text>
</comment>
<dbReference type="EMBL" id="AP008226">
    <property type="protein sequence ID" value="BAD71499.1"/>
    <property type="molecule type" value="Genomic_DNA"/>
</dbReference>
<dbReference type="RefSeq" id="WP_008633391.1">
    <property type="nucleotide sequence ID" value="NC_006461.1"/>
</dbReference>
<dbReference type="RefSeq" id="YP_144942.1">
    <property type="nucleotide sequence ID" value="NC_006461.1"/>
</dbReference>
<dbReference type="PDB" id="1VVJ">
    <property type="method" value="X-ray"/>
    <property type="resolution" value="3.44 A"/>
    <property type="chains" value="RS/YS=1-112"/>
</dbReference>
<dbReference type="PDB" id="1VY4">
    <property type="method" value="X-ray"/>
    <property type="resolution" value="2.60 A"/>
    <property type="chains" value="BS/DS=1-112"/>
</dbReference>
<dbReference type="PDB" id="1VY5">
    <property type="method" value="X-ray"/>
    <property type="resolution" value="2.55 A"/>
    <property type="chains" value="BS/DS=1-112"/>
</dbReference>
<dbReference type="PDB" id="1VY6">
    <property type="method" value="X-ray"/>
    <property type="resolution" value="2.90 A"/>
    <property type="chains" value="BS/DS=1-112"/>
</dbReference>
<dbReference type="PDB" id="1VY7">
    <property type="method" value="X-ray"/>
    <property type="resolution" value="2.80 A"/>
    <property type="chains" value="BS/DS=1-112"/>
</dbReference>
<dbReference type="PDB" id="4L47">
    <property type="method" value="X-ray"/>
    <property type="resolution" value="3.22 A"/>
    <property type="chains" value="RS/YS=1-112"/>
</dbReference>
<dbReference type="PDB" id="4L71">
    <property type="method" value="X-ray"/>
    <property type="resolution" value="3.90 A"/>
    <property type="chains" value="RS/YS=1-112"/>
</dbReference>
<dbReference type="PDB" id="4LEL">
    <property type="method" value="X-ray"/>
    <property type="resolution" value="3.90 A"/>
    <property type="chains" value="RS/YS=1-112"/>
</dbReference>
<dbReference type="PDB" id="4LFZ">
    <property type="method" value="X-ray"/>
    <property type="resolution" value="3.92 A"/>
    <property type="chains" value="RS/YS=1-112"/>
</dbReference>
<dbReference type="PDB" id="4LNT">
    <property type="method" value="X-ray"/>
    <property type="resolution" value="2.94 A"/>
    <property type="chains" value="RS/YS=1-112"/>
</dbReference>
<dbReference type="PDB" id="4LSK">
    <property type="method" value="X-ray"/>
    <property type="resolution" value="3.48 A"/>
    <property type="chains" value="RS/YS=1-112"/>
</dbReference>
<dbReference type="PDB" id="4LT8">
    <property type="method" value="X-ray"/>
    <property type="resolution" value="3.14 A"/>
    <property type="chains" value="RS/YS=1-112"/>
</dbReference>
<dbReference type="PDB" id="4P6F">
    <property type="method" value="X-ray"/>
    <property type="resolution" value="3.60 A"/>
    <property type="chains" value="RS/YS=1-112"/>
</dbReference>
<dbReference type="PDB" id="4P70">
    <property type="method" value="X-ray"/>
    <property type="resolution" value="3.68 A"/>
    <property type="chains" value="RS/YS=1-112"/>
</dbReference>
<dbReference type="PDB" id="4TUA">
    <property type="method" value="X-ray"/>
    <property type="resolution" value="3.60 A"/>
    <property type="chains" value="RS/YS=1-112"/>
</dbReference>
<dbReference type="PDB" id="4TUB">
    <property type="method" value="X-ray"/>
    <property type="resolution" value="3.60 A"/>
    <property type="chains" value="RS/YS=1-112"/>
</dbReference>
<dbReference type="PDB" id="4TUC">
    <property type="method" value="X-ray"/>
    <property type="resolution" value="3.60 A"/>
    <property type="chains" value="RS/YS=1-112"/>
</dbReference>
<dbReference type="PDB" id="4TUD">
    <property type="method" value="X-ray"/>
    <property type="resolution" value="3.60 A"/>
    <property type="chains" value="RS/YS=1-112"/>
</dbReference>
<dbReference type="PDB" id="4TUE">
    <property type="method" value="X-ray"/>
    <property type="resolution" value="3.50 A"/>
    <property type="chains" value="RS/YS=1-112"/>
</dbReference>
<dbReference type="PDB" id="4V42">
    <property type="method" value="X-ray"/>
    <property type="resolution" value="5.50 A"/>
    <property type="chains" value="BQ=1-112"/>
</dbReference>
<dbReference type="PDB" id="4V4P">
    <property type="method" value="X-ray"/>
    <property type="resolution" value="5.50 A"/>
    <property type="chains" value="Q=1-112"/>
</dbReference>
<dbReference type="PDB" id="4V4X">
    <property type="method" value="X-ray"/>
    <property type="resolution" value="5.00 A"/>
    <property type="chains" value="BR=1-112"/>
</dbReference>
<dbReference type="PDB" id="4V4Y">
    <property type="method" value="X-ray"/>
    <property type="resolution" value="5.50 A"/>
    <property type="chains" value="BR=1-112"/>
</dbReference>
<dbReference type="PDB" id="4V4Z">
    <property type="method" value="X-ray"/>
    <property type="resolution" value="4.51 A"/>
    <property type="chains" value="BR=1-112"/>
</dbReference>
<dbReference type="PDB" id="4V51">
    <property type="method" value="X-ray"/>
    <property type="resolution" value="2.80 A"/>
    <property type="chains" value="BS/DS=2-112"/>
</dbReference>
<dbReference type="PDB" id="4V5A">
    <property type="method" value="X-ray"/>
    <property type="resolution" value="3.50 A"/>
    <property type="chains" value="BS/DS=2-112"/>
</dbReference>
<dbReference type="PDB" id="4V5C">
    <property type="method" value="X-ray"/>
    <property type="resolution" value="3.30 A"/>
    <property type="chains" value="BS/DS=1-112"/>
</dbReference>
<dbReference type="PDB" id="4V5D">
    <property type="method" value="X-ray"/>
    <property type="resolution" value="3.50 A"/>
    <property type="chains" value="BS/DS=1-112"/>
</dbReference>
<dbReference type="PDB" id="4V5E">
    <property type="method" value="X-ray"/>
    <property type="resolution" value="3.45 A"/>
    <property type="chains" value="BS/DS=1-112"/>
</dbReference>
<dbReference type="PDB" id="4V5F">
    <property type="method" value="X-ray"/>
    <property type="resolution" value="3.60 A"/>
    <property type="chains" value="BS/DS=1-112"/>
</dbReference>
<dbReference type="PDB" id="4V5G">
    <property type="method" value="X-ray"/>
    <property type="resolution" value="3.60 A"/>
    <property type="chains" value="BS/DS=1-112"/>
</dbReference>
<dbReference type="PDB" id="4V5J">
    <property type="method" value="X-ray"/>
    <property type="resolution" value="3.10 A"/>
    <property type="chains" value="BS/DS=1-112"/>
</dbReference>
<dbReference type="PDB" id="4V5K">
    <property type="method" value="X-ray"/>
    <property type="resolution" value="3.20 A"/>
    <property type="chains" value="BS/DS=1-112"/>
</dbReference>
<dbReference type="PDB" id="4V5L">
    <property type="method" value="X-ray"/>
    <property type="resolution" value="3.10 A"/>
    <property type="chains" value="BS=1-112"/>
</dbReference>
<dbReference type="PDB" id="4V5M">
    <property type="method" value="EM"/>
    <property type="resolution" value="7.80 A"/>
    <property type="chains" value="BS=1-112"/>
</dbReference>
<dbReference type="PDB" id="4V5N">
    <property type="method" value="EM"/>
    <property type="resolution" value="7.60 A"/>
    <property type="chains" value="BS=1-112"/>
</dbReference>
<dbReference type="PDB" id="4V5P">
    <property type="method" value="X-ray"/>
    <property type="resolution" value="3.10 A"/>
    <property type="chains" value="BS/DS=1-112"/>
</dbReference>
<dbReference type="PDB" id="4V5Q">
    <property type="method" value="X-ray"/>
    <property type="resolution" value="3.10 A"/>
    <property type="chains" value="BS/DS=1-112"/>
</dbReference>
<dbReference type="PDB" id="4V5R">
    <property type="method" value="X-ray"/>
    <property type="resolution" value="3.10 A"/>
    <property type="chains" value="BS/DS=1-112"/>
</dbReference>
<dbReference type="PDB" id="4V5S">
    <property type="method" value="X-ray"/>
    <property type="resolution" value="3.10 A"/>
    <property type="chains" value="BS/DS=1-112"/>
</dbReference>
<dbReference type="PDB" id="4V68">
    <property type="method" value="EM"/>
    <property type="resolution" value="6.40 A"/>
    <property type="chains" value="BS=11-109"/>
</dbReference>
<dbReference type="PDB" id="4V6A">
    <property type="method" value="X-ray"/>
    <property type="resolution" value="3.10 A"/>
    <property type="chains" value="BS/DS=1-112"/>
</dbReference>
<dbReference type="PDB" id="4V6F">
    <property type="method" value="X-ray"/>
    <property type="resolution" value="3.10 A"/>
    <property type="chains" value="AQ/DQ=1-112"/>
</dbReference>
<dbReference type="PDB" id="4V6G">
    <property type="method" value="X-ray"/>
    <property type="resolution" value="3.50 A"/>
    <property type="chains" value="BQ/DQ=1-112"/>
</dbReference>
<dbReference type="PDB" id="4V7J">
    <property type="method" value="X-ray"/>
    <property type="resolution" value="3.30 A"/>
    <property type="chains" value="AS/BS=1-112"/>
</dbReference>
<dbReference type="PDB" id="4V7K">
    <property type="method" value="X-ray"/>
    <property type="resolution" value="3.60 A"/>
    <property type="chains" value="AS/BS=1-112"/>
</dbReference>
<dbReference type="PDB" id="4V7L">
    <property type="method" value="X-ray"/>
    <property type="resolution" value="3.00 A"/>
    <property type="chains" value="BS/DS=1-112"/>
</dbReference>
<dbReference type="PDB" id="4V7M">
    <property type="method" value="X-ray"/>
    <property type="resolution" value="3.45 A"/>
    <property type="chains" value="BS/DS=1-112"/>
</dbReference>
<dbReference type="PDB" id="4V7W">
    <property type="method" value="X-ray"/>
    <property type="resolution" value="3.00 A"/>
    <property type="chains" value="BS/DS=1-112"/>
</dbReference>
<dbReference type="PDB" id="4V7X">
    <property type="method" value="X-ray"/>
    <property type="resolution" value="3.00 A"/>
    <property type="chains" value="BS/DS=1-112"/>
</dbReference>
<dbReference type="PDB" id="4V7Y">
    <property type="method" value="X-ray"/>
    <property type="resolution" value="3.00 A"/>
    <property type="chains" value="BS/DS=1-112"/>
</dbReference>
<dbReference type="PDB" id="4V7Z">
    <property type="method" value="X-ray"/>
    <property type="resolution" value="3.10 A"/>
    <property type="chains" value="BS/DS=1-112"/>
</dbReference>
<dbReference type="PDB" id="4V87">
    <property type="method" value="X-ray"/>
    <property type="resolution" value="3.10 A"/>
    <property type="chains" value="AQ/DQ=2-112"/>
</dbReference>
<dbReference type="PDB" id="4V8A">
    <property type="method" value="X-ray"/>
    <property type="resolution" value="3.20 A"/>
    <property type="chains" value="AS/BS=1-112"/>
</dbReference>
<dbReference type="PDB" id="4V8B">
    <property type="method" value="X-ray"/>
    <property type="resolution" value="3.00 A"/>
    <property type="chains" value="BQ/DQ=1-112"/>
</dbReference>
<dbReference type="PDB" id="4V8C">
    <property type="method" value="X-ray"/>
    <property type="resolution" value="3.30 A"/>
    <property type="chains" value="AQ/BQ=1-112"/>
</dbReference>
<dbReference type="PDB" id="4V8D">
    <property type="method" value="X-ray"/>
    <property type="resolution" value="3.00 A"/>
    <property type="chains" value="BQ/DQ=1-112"/>
</dbReference>
<dbReference type="PDB" id="4V8E">
    <property type="method" value="X-ray"/>
    <property type="resolution" value="3.30 A"/>
    <property type="chains" value="AQ/CQ=1-112"/>
</dbReference>
<dbReference type="PDB" id="4V8F">
    <property type="method" value="X-ray"/>
    <property type="resolution" value="3.30 A"/>
    <property type="chains" value="AQ/DQ=1-112"/>
</dbReference>
<dbReference type="PDB" id="4V8G">
    <property type="method" value="X-ray"/>
    <property type="resolution" value="3.00 A"/>
    <property type="chains" value="BS/DS=1-112"/>
</dbReference>
<dbReference type="PDB" id="4V8H">
    <property type="method" value="X-ray"/>
    <property type="resolution" value="3.10 A"/>
    <property type="chains" value="BS/DS=1-112"/>
</dbReference>
<dbReference type="PDB" id="4V8I">
    <property type="method" value="X-ray"/>
    <property type="resolution" value="2.70 A"/>
    <property type="chains" value="BS/DS=1-112"/>
</dbReference>
<dbReference type="PDB" id="4V8J">
    <property type="method" value="X-ray"/>
    <property type="resolution" value="3.90 A"/>
    <property type="chains" value="BS/DS=1-112"/>
</dbReference>
<dbReference type="PDB" id="4V8N">
    <property type="method" value="X-ray"/>
    <property type="resolution" value="3.10 A"/>
    <property type="chains" value="BS/DS=1-112"/>
</dbReference>
<dbReference type="PDB" id="4V8O">
    <property type="method" value="X-ray"/>
    <property type="resolution" value="3.80 A"/>
    <property type="chains" value="BS=1-112"/>
</dbReference>
<dbReference type="PDB" id="4V8Q">
    <property type="method" value="X-ray"/>
    <property type="resolution" value="3.10 A"/>
    <property type="chains" value="AS=1-112"/>
</dbReference>
<dbReference type="PDB" id="4V8U">
    <property type="method" value="X-ray"/>
    <property type="resolution" value="3.70 A"/>
    <property type="chains" value="BS/DS=1-112"/>
</dbReference>
<dbReference type="PDB" id="4V8X">
    <property type="method" value="X-ray"/>
    <property type="resolution" value="3.35 A"/>
    <property type="chains" value="BS/DS=1-112"/>
</dbReference>
<dbReference type="PDB" id="4V90">
    <property type="method" value="X-ray"/>
    <property type="resolution" value="2.95 A"/>
    <property type="chains" value="BS=2-112"/>
</dbReference>
<dbReference type="PDB" id="4V95">
    <property type="method" value="X-ray"/>
    <property type="resolution" value="3.20 A"/>
    <property type="chains" value="BS/DS=1-112"/>
</dbReference>
<dbReference type="PDB" id="4V97">
    <property type="method" value="X-ray"/>
    <property type="resolution" value="3.52 A"/>
    <property type="chains" value="BS/DS=1-112"/>
</dbReference>
<dbReference type="PDB" id="4V9A">
    <property type="method" value="X-ray"/>
    <property type="resolution" value="3.30 A"/>
    <property type="chains" value="BQ/DQ=1-112"/>
</dbReference>
<dbReference type="PDB" id="4V9B">
    <property type="method" value="X-ray"/>
    <property type="resolution" value="3.10 A"/>
    <property type="chains" value="BQ/DQ=1-112"/>
</dbReference>
<dbReference type="PDB" id="4V9H">
    <property type="method" value="X-ray"/>
    <property type="resolution" value="2.86 A"/>
    <property type="chains" value="BS=1-112"/>
</dbReference>
<dbReference type="PDB" id="4V9I">
    <property type="method" value="X-ray"/>
    <property type="resolution" value="3.30 A"/>
    <property type="chains" value="BS/DS=11-108"/>
</dbReference>
<dbReference type="PDB" id="4V9R">
    <property type="method" value="X-ray"/>
    <property type="resolution" value="3.00 A"/>
    <property type="chains" value="BS/DS=1-112"/>
</dbReference>
<dbReference type="PDB" id="4V9S">
    <property type="method" value="X-ray"/>
    <property type="resolution" value="3.10 A"/>
    <property type="chains" value="BS/DS=1-112"/>
</dbReference>
<dbReference type="PDB" id="4W2E">
    <property type="method" value="X-ray"/>
    <property type="resolution" value="2.90 A"/>
    <property type="chains" value="S=1-112"/>
</dbReference>
<dbReference type="PDB" id="4W2F">
    <property type="method" value="X-ray"/>
    <property type="resolution" value="2.40 A"/>
    <property type="chains" value="BS/DS=1-112"/>
</dbReference>
<dbReference type="PDB" id="4W2G">
    <property type="method" value="X-ray"/>
    <property type="resolution" value="2.55 A"/>
    <property type="chains" value="BS/DS=1-112"/>
</dbReference>
<dbReference type="PDB" id="4W2H">
    <property type="method" value="X-ray"/>
    <property type="resolution" value="2.70 A"/>
    <property type="chains" value="BS/DS=1-112"/>
</dbReference>
<dbReference type="PDB" id="4W2I">
    <property type="method" value="X-ray"/>
    <property type="resolution" value="2.70 A"/>
    <property type="chains" value="BS/DS=1-112"/>
</dbReference>
<dbReference type="PDB" id="4W4G">
    <property type="method" value="X-ray"/>
    <property type="resolution" value="3.30 A"/>
    <property type="chains" value="RS/YS=1-112"/>
</dbReference>
<dbReference type="PDB" id="4WPO">
    <property type="method" value="X-ray"/>
    <property type="resolution" value="2.80 A"/>
    <property type="chains" value="AS/CS=1-112"/>
</dbReference>
<dbReference type="PDB" id="4WQ1">
    <property type="method" value="X-ray"/>
    <property type="resolution" value="3.10 A"/>
    <property type="chains" value="65/A8=2-112"/>
</dbReference>
<dbReference type="PDB" id="4WQF">
    <property type="method" value="X-ray"/>
    <property type="resolution" value="2.80 A"/>
    <property type="chains" value="AS/CS=1-112"/>
</dbReference>
<dbReference type="PDB" id="4WQR">
    <property type="method" value="X-ray"/>
    <property type="resolution" value="3.15 A"/>
    <property type="chains" value="65/A8=1-112"/>
</dbReference>
<dbReference type="PDB" id="4WQU">
    <property type="method" value="X-ray"/>
    <property type="resolution" value="2.80 A"/>
    <property type="chains" value="AS/CS=1-112"/>
</dbReference>
<dbReference type="PDB" id="4WQY">
    <property type="method" value="X-ray"/>
    <property type="resolution" value="2.80 A"/>
    <property type="chains" value="AS/CS=1-112"/>
</dbReference>
<dbReference type="PDB" id="4WR6">
    <property type="method" value="X-ray"/>
    <property type="resolution" value="3.05 A"/>
    <property type="chains" value="65/A8=1-112"/>
</dbReference>
<dbReference type="PDB" id="4WRA">
    <property type="method" value="X-ray"/>
    <property type="resolution" value="3.05 A"/>
    <property type="chains" value="65/A8=1-112"/>
</dbReference>
<dbReference type="PDB" id="4WRO">
    <property type="method" value="X-ray"/>
    <property type="resolution" value="3.05 A"/>
    <property type="chains" value="A8=1-112"/>
</dbReference>
<dbReference type="PDB" id="4WSD">
    <property type="method" value="X-ray"/>
    <property type="resolution" value="2.95 A"/>
    <property type="chains" value="65/A8=1-112"/>
</dbReference>
<dbReference type="PDB" id="4WSM">
    <property type="method" value="X-ray"/>
    <property type="resolution" value="3.30 A"/>
    <property type="chains" value="65/A8=1-112"/>
</dbReference>
<dbReference type="PDB" id="4WT1">
    <property type="method" value="X-ray"/>
    <property type="resolution" value="3.05 A"/>
    <property type="chains" value="65/A8=1-112"/>
</dbReference>
<dbReference type="PDB" id="4WT8">
    <property type="method" value="X-ray"/>
    <property type="resolution" value="3.40 A"/>
    <property type="chains" value="CR/DR=11-108"/>
</dbReference>
<dbReference type="PDB" id="4WU1">
    <property type="method" value="X-ray"/>
    <property type="resolution" value="3.20 A"/>
    <property type="chains" value="65/A8=1-112"/>
</dbReference>
<dbReference type="PDB" id="4WZD">
    <property type="method" value="X-ray"/>
    <property type="resolution" value="3.10 A"/>
    <property type="chains" value="65/A8=1-112"/>
</dbReference>
<dbReference type="PDB" id="4WZO">
    <property type="method" value="X-ray"/>
    <property type="resolution" value="3.30 A"/>
    <property type="chains" value="65/A8=1-112"/>
</dbReference>
<dbReference type="PDB" id="4Y4O">
    <property type="method" value="X-ray"/>
    <property type="resolution" value="2.30 A"/>
    <property type="chains" value="1S/2S=1-112"/>
</dbReference>
<dbReference type="PDB" id="4Y4P">
    <property type="method" value="X-ray"/>
    <property type="resolution" value="2.50 A"/>
    <property type="chains" value="1S/2S=1-112"/>
</dbReference>
<dbReference type="PDB" id="4YPB">
    <property type="method" value="X-ray"/>
    <property type="resolution" value="3.40 A"/>
    <property type="chains" value="RS/YS=1-112"/>
</dbReference>
<dbReference type="PDB" id="4YZV">
    <property type="method" value="X-ray"/>
    <property type="resolution" value="3.10 A"/>
    <property type="chains" value="RS/YS=1-112"/>
</dbReference>
<dbReference type="PDB" id="4Z3S">
    <property type="method" value="X-ray"/>
    <property type="resolution" value="2.65 A"/>
    <property type="chains" value="1S/2S=1-112"/>
</dbReference>
<dbReference type="PDB" id="4Z8C">
    <property type="method" value="X-ray"/>
    <property type="resolution" value="2.90 A"/>
    <property type="chains" value="1S/2S=1-112"/>
</dbReference>
<dbReference type="PDB" id="4ZER">
    <property type="method" value="X-ray"/>
    <property type="resolution" value="3.10 A"/>
    <property type="chains" value="1S/2S=3-112"/>
</dbReference>
<dbReference type="PDB" id="4ZSN">
    <property type="method" value="X-ray"/>
    <property type="resolution" value="3.60 A"/>
    <property type="chains" value="RS/YS=1-112"/>
</dbReference>
<dbReference type="PDB" id="5A9Z">
    <property type="method" value="EM"/>
    <property type="resolution" value="4.70 A"/>
    <property type="chains" value="AP=3-112"/>
</dbReference>
<dbReference type="PDB" id="5AA0">
    <property type="method" value="EM"/>
    <property type="resolution" value="5.00 A"/>
    <property type="chains" value="AP=3-112"/>
</dbReference>
<dbReference type="PDB" id="5CZP">
    <property type="method" value="X-ray"/>
    <property type="resolution" value="3.30 A"/>
    <property type="chains" value="RS/YS=1-112"/>
</dbReference>
<dbReference type="PDB" id="5D8B">
    <property type="method" value="X-ray"/>
    <property type="resolution" value="3.63 A"/>
    <property type="chains" value="IB/M=1-112"/>
</dbReference>
<dbReference type="PDB" id="5DFE">
    <property type="method" value="X-ray"/>
    <property type="resolution" value="3.10 A"/>
    <property type="chains" value="RS/YS=1-112"/>
</dbReference>
<dbReference type="PDB" id="5DOX">
    <property type="method" value="X-ray"/>
    <property type="resolution" value="3.10 A"/>
    <property type="chains" value="1S/2S=1-112"/>
</dbReference>
<dbReference type="PDB" id="5DOY">
    <property type="method" value="X-ray"/>
    <property type="resolution" value="2.60 A"/>
    <property type="chains" value="1S/2S=1-112"/>
</dbReference>
<dbReference type="PDB" id="5E7K">
    <property type="method" value="X-ray"/>
    <property type="resolution" value="3.20 A"/>
    <property type="chains" value="65/A8=1-112"/>
</dbReference>
<dbReference type="PDB" id="5E81">
    <property type="method" value="X-ray"/>
    <property type="resolution" value="2.95 A"/>
    <property type="chains" value="65/A8=1-112"/>
</dbReference>
<dbReference type="PDB" id="5EL4">
    <property type="method" value="X-ray"/>
    <property type="resolution" value="3.15 A"/>
    <property type="chains" value="65/A8=1-112"/>
</dbReference>
<dbReference type="PDB" id="5EL5">
    <property type="method" value="X-ray"/>
    <property type="resolution" value="3.15 A"/>
    <property type="chains" value="65/A8=1-112"/>
</dbReference>
<dbReference type="PDB" id="5EL6">
    <property type="method" value="X-ray"/>
    <property type="resolution" value="3.10 A"/>
    <property type="chains" value="65/A8=1-112"/>
</dbReference>
<dbReference type="PDB" id="5EL7">
    <property type="method" value="X-ray"/>
    <property type="resolution" value="3.15 A"/>
    <property type="chains" value="65/A8=1-112"/>
</dbReference>
<dbReference type="PDB" id="5F8K">
    <property type="method" value="X-ray"/>
    <property type="resolution" value="2.80 A"/>
    <property type="chains" value="1S/2S=3-112"/>
</dbReference>
<dbReference type="PDB" id="5FDU">
    <property type="method" value="X-ray"/>
    <property type="resolution" value="2.90 A"/>
    <property type="chains" value="1S/2S=3-112"/>
</dbReference>
<dbReference type="PDB" id="5FDV">
    <property type="method" value="X-ray"/>
    <property type="resolution" value="2.80 A"/>
    <property type="chains" value="1S/2S=3-112"/>
</dbReference>
<dbReference type="PDB" id="5HAU">
    <property type="method" value="X-ray"/>
    <property type="resolution" value="3.00 A"/>
    <property type="chains" value="1Q/2Q=1-112"/>
</dbReference>
<dbReference type="PDB" id="5HCP">
    <property type="method" value="X-ray"/>
    <property type="resolution" value="2.89 A"/>
    <property type="chains" value="1S/2S=1-112"/>
</dbReference>
<dbReference type="PDB" id="5HCQ">
    <property type="method" value="X-ray"/>
    <property type="resolution" value="2.80 A"/>
    <property type="chains" value="1S/2S=1-112"/>
</dbReference>
<dbReference type="PDB" id="5HCR">
    <property type="method" value="X-ray"/>
    <property type="resolution" value="2.80 A"/>
    <property type="chains" value="1S/2S=1-112"/>
</dbReference>
<dbReference type="PDB" id="5HD1">
    <property type="method" value="X-ray"/>
    <property type="resolution" value="2.70 A"/>
    <property type="chains" value="1S/2S=1-112"/>
</dbReference>
<dbReference type="PDB" id="5IB7">
    <property type="method" value="X-ray"/>
    <property type="resolution" value="2.99 A"/>
    <property type="chains" value="65/A8=1-112"/>
</dbReference>
<dbReference type="PDB" id="5IB8">
    <property type="method" value="X-ray"/>
    <property type="resolution" value="3.13 A"/>
    <property type="chains" value="65/A8=1-112"/>
</dbReference>
<dbReference type="PDB" id="5IBB">
    <property type="method" value="X-ray"/>
    <property type="resolution" value="2.96 A"/>
    <property type="chains" value="65/A8=1-112"/>
</dbReference>
<dbReference type="PDB" id="5IMQ">
    <property type="method" value="EM"/>
    <property type="resolution" value="3.80 A"/>
    <property type="chains" value="k=1-112"/>
</dbReference>
<dbReference type="PDB" id="5IMR">
    <property type="method" value="EM"/>
    <property type="chains" value="k=1-112"/>
</dbReference>
<dbReference type="PDB" id="5J30">
    <property type="method" value="X-ray"/>
    <property type="resolution" value="3.20 A"/>
    <property type="chains" value="RS/YS=1-112"/>
</dbReference>
<dbReference type="PDB" id="5J3C">
    <property type="method" value="X-ray"/>
    <property type="resolution" value="3.04 A"/>
    <property type="chains" value="RS/YS=1-112"/>
</dbReference>
<dbReference type="PDB" id="5J4B">
    <property type="method" value="X-ray"/>
    <property type="resolution" value="2.60 A"/>
    <property type="chains" value="1S/2S=1-112"/>
</dbReference>
<dbReference type="PDB" id="5J4C">
    <property type="method" value="X-ray"/>
    <property type="resolution" value="2.80 A"/>
    <property type="chains" value="1S/2S=1-112"/>
</dbReference>
<dbReference type="PDB" id="5J8B">
    <property type="method" value="X-ray"/>
    <property type="resolution" value="2.60 A"/>
    <property type="chains" value="S=1-112"/>
</dbReference>
<dbReference type="PDB" id="5NDJ">
    <property type="method" value="X-ray"/>
    <property type="resolution" value="3.15 A"/>
    <property type="chains" value="65/A8=1-112"/>
</dbReference>
<dbReference type="PDB" id="5NDK">
    <property type="method" value="X-ray"/>
    <property type="resolution" value="2.95 A"/>
    <property type="chains" value="65/A8=1-112"/>
</dbReference>
<dbReference type="PDB" id="5OT7">
    <property type="method" value="EM"/>
    <property type="resolution" value="3.80 A"/>
    <property type="chains" value="t=11-109"/>
</dbReference>
<dbReference type="PDB" id="5UQ7">
    <property type="method" value="EM"/>
    <property type="resolution" value="3.50 A"/>
    <property type="chains" value="S=3-112"/>
</dbReference>
<dbReference type="PDB" id="5UQ8">
    <property type="method" value="EM"/>
    <property type="resolution" value="3.20 A"/>
    <property type="chains" value="S=3-112"/>
</dbReference>
<dbReference type="PDB" id="5VP2">
    <property type="method" value="X-ray"/>
    <property type="resolution" value="2.80 A"/>
    <property type="chains" value="1S/2S=1-112"/>
</dbReference>
<dbReference type="PDB" id="5VPO">
    <property type="method" value="X-ray"/>
    <property type="resolution" value="3.34 A"/>
    <property type="chains" value="RS/YS=1-112"/>
</dbReference>
<dbReference type="PDB" id="5VPP">
    <property type="method" value="X-ray"/>
    <property type="resolution" value="3.90 A"/>
    <property type="chains" value="RS/YS=1-112"/>
</dbReference>
<dbReference type="PDB" id="5W4K">
    <property type="method" value="X-ray"/>
    <property type="resolution" value="2.70 A"/>
    <property type="chains" value="1S/2S=1-112"/>
</dbReference>
<dbReference type="PDB" id="5WIS">
    <property type="method" value="X-ray"/>
    <property type="resolution" value="2.70 A"/>
    <property type="chains" value="1S/2S=1-112"/>
</dbReference>
<dbReference type="PDB" id="5WIT">
    <property type="method" value="X-ray"/>
    <property type="resolution" value="2.60 A"/>
    <property type="chains" value="1S/2S=1-112"/>
</dbReference>
<dbReference type="PDB" id="5ZLU">
    <property type="method" value="EM"/>
    <property type="resolution" value="3.60 A"/>
    <property type="chains" value="l=1-112"/>
</dbReference>
<dbReference type="PDB" id="6BUW">
    <property type="method" value="X-ray"/>
    <property type="resolution" value="3.50 A"/>
    <property type="chains" value="RS/YS=1-112"/>
</dbReference>
<dbReference type="PDB" id="6BZ6">
    <property type="method" value="X-ray"/>
    <property type="resolution" value="3.18 A"/>
    <property type="chains" value="RS/YS=1-112"/>
</dbReference>
<dbReference type="PDB" id="6BZ7">
    <property type="method" value="X-ray"/>
    <property type="resolution" value="3.68 A"/>
    <property type="chains" value="RS/YS=1-112"/>
</dbReference>
<dbReference type="PDB" id="6BZ8">
    <property type="method" value="X-ray"/>
    <property type="resolution" value="3.74 A"/>
    <property type="chains" value="RS/YS=1-112"/>
</dbReference>
<dbReference type="PDB" id="6C5L">
    <property type="method" value="X-ray"/>
    <property type="resolution" value="3.20 A"/>
    <property type="chains" value="BS/DS=1-112"/>
</dbReference>
<dbReference type="PDB" id="6CAE">
    <property type="method" value="X-ray"/>
    <property type="resolution" value="2.60 A"/>
    <property type="chains" value="1S/2S=1-112"/>
</dbReference>
<dbReference type="PDB" id="6CFJ">
    <property type="method" value="X-ray"/>
    <property type="resolution" value="2.80 A"/>
    <property type="chains" value="1S/2S=1-112"/>
</dbReference>
<dbReference type="PDB" id="6CFK">
    <property type="method" value="X-ray"/>
    <property type="resolution" value="2.70 A"/>
    <property type="chains" value="1S/2S=1-112"/>
</dbReference>
<dbReference type="PDB" id="6CFL">
    <property type="method" value="X-ray"/>
    <property type="resolution" value="2.60 A"/>
    <property type="chains" value="1S/2S=1-112"/>
</dbReference>
<dbReference type="PDB" id="6CZR">
    <property type="method" value="X-ray"/>
    <property type="resolution" value="3.14 A"/>
    <property type="chains" value="1S/2S=3-112"/>
</dbReference>
<dbReference type="PDB" id="6FKR">
    <property type="method" value="X-ray"/>
    <property type="resolution" value="3.20 A"/>
    <property type="chains" value="1S/2S=3-112"/>
</dbReference>
<dbReference type="PDB" id="6GSJ">
    <property type="method" value="X-ray"/>
    <property type="resolution" value="2.96 A"/>
    <property type="chains" value="65/A8=1-112"/>
</dbReference>
<dbReference type="PDB" id="6GSK">
    <property type="method" value="X-ray"/>
    <property type="resolution" value="3.36 A"/>
    <property type="chains" value="65/A8=1-112"/>
</dbReference>
<dbReference type="PDB" id="6GSL">
    <property type="method" value="X-ray"/>
    <property type="resolution" value="3.16 A"/>
    <property type="chains" value="65/A8=1-112"/>
</dbReference>
<dbReference type="PDB" id="6GZQ">
    <property type="method" value="EM"/>
    <property type="resolution" value="3.28 A"/>
    <property type="chains" value="N1=2-112"/>
</dbReference>
<dbReference type="PDB" id="6GZX">
    <property type="method" value="EM"/>
    <property type="resolution" value="4.57 A"/>
    <property type="chains" value="N1/N2=2-112"/>
</dbReference>
<dbReference type="PDB" id="6GZZ">
    <property type="method" value="EM"/>
    <property type="resolution" value="4.13 A"/>
    <property type="chains" value="N1/N2=2-112"/>
</dbReference>
<dbReference type="PDB" id="6N9E">
    <property type="method" value="X-ray"/>
    <property type="resolution" value="3.70 A"/>
    <property type="chains" value="1S/2S=1-112"/>
</dbReference>
<dbReference type="PDB" id="6N9F">
    <property type="method" value="X-ray"/>
    <property type="resolution" value="3.70 A"/>
    <property type="chains" value="1S/2S=1-112"/>
</dbReference>
<dbReference type="PDB" id="6ND5">
    <property type="method" value="X-ray"/>
    <property type="resolution" value="2.60 A"/>
    <property type="chains" value="1S/2S=1-112"/>
</dbReference>
<dbReference type="PDB" id="6ND6">
    <property type="method" value="X-ray"/>
    <property type="resolution" value="2.85 A"/>
    <property type="chains" value="1S/2S=1-112"/>
</dbReference>
<dbReference type="PDB" id="6NDK">
    <property type="method" value="X-ray"/>
    <property type="resolution" value="3.64 A"/>
    <property type="chains" value="RS/YS=1-112"/>
</dbReference>
<dbReference type="PDB" id="6NSH">
    <property type="method" value="X-ray"/>
    <property type="resolution" value="3.40 A"/>
    <property type="chains" value="RS/YS=1-112"/>
</dbReference>
<dbReference type="PDB" id="6NTA">
    <property type="method" value="X-ray"/>
    <property type="resolution" value="3.10 A"/>
    <property type="chains" value="RS/YS=1-112"/>
</dbReference>
<dbReference type="PDB" id="6NUO">
    <property type="method" value="X-ray"/>
    <property type="resolution" value="3.20 A"/>
    <property type="chains" value="RS/YS=1-112"/>
</dbReference>
<dbReference type="PDB" id="6NWY">
    <property type="method" value="X-ray"/>
    <property type="resolution" value="3.50 A"/>
    <property type="chains" value="RS/YS=1-112"/>
</dbReference>
<dbReference type="PDB" id="6O3M">
    <property type="method" value="X-ray"/>
    <property type="resolution" value="3.97 A"/>
    <property type="chains" value="RS/YS=1-112"/>
</dbReference>
<dbReference type="PDB" id="6O97">
    <property type="method" value="X-ray"/>
    <property type="resolution" value="2.75 A"/>
    <property type="chains" value="1S/2S=1-112"/>
</dbReference>
<dbReference type="PDB" id="6OF1">
    <property type="method" value="X-ray"/>
    <property type="resolution" value="2.80 A"/>
    <property type="chains" value="1S/2S=1-112"/>
</dbReference>
<dbReference type="PDB" id="6OF6">
    <property type="method" value="X-ray"/>
    <property type="resolution" value="3.20 A"/>
    <property type="chains" value="RS/YS=1-112"/>
</dbReference>
<dbReference type="PDB" id="6OJ2">
    <property type="method" value="X-ray"/>
    <property type="resolution" value="3.20 A"/>
    <property type="chains" value="RS/YS=1-112"/>
</dbReference>
<dbReference type="PDB" id="6OPE">
    <property type="method" value="X-ray"/>
    <property type="resolution" value="3.10 A"/>
    <property type="chains" value="RS/YS=1-112"/>
</dbReference>
<dbReference type="PDB" id="6ORD">
    <property type="method" value="X-ray"/>
    <property type="resolution" value="3.10 A"/>
    <property type="chains" value="RS/YS=1-112"/>
</dbReference>
<dbReference type="PDB" id="6OSI">
    <property type="method" value="X-ray"/>
    <property type="resolution" value="4.14 A"/>
    <property type="chains" value="RS/YS=1-112"/>
</dbReference>
<dbReference type="PDB" id="6OTR">
    <property type="method" value="X-ray"/>
    <property type="resolution" value="3.12 A"/>
    <property type="chains" value="RS/YS=1-112"/>
</dbReference>
<dbReference type="PDB" id="6OXA">
    <property type="method" value="X-ray"/>
    <property type="resolution" value="3.25 A"/>
    <property type="chains" value="RS/YS=1-112"/>
</dbReference>
<dbReference type="PDB" id="6OXI">
    <property type="method" value="X-ray"/>
    <property type="resolution" value="3.50 A"/>
    <property type="chains" value="RS/YS=1-112"/>
</dbReference>
<dbReference type="PDB" id="6Q95">
    <property type="method" value="EM"/>
    <property type="resolution" value="3.70 A"/>
    <property type="chains" value="O=11-109"/>
</dbReference>
<dbReference type="PDB" id="6QNQ">
    <property type="method" value="X-ray"/>
    <property type="resolution" value="3.50 A"/>
    <property type="chains" value="65/A8=1-112"/>
</dbReference>
<dbReference type="PDB" id="6QNR">
    <property type="method" value="X-ray"/>
    <property type="resolution" value="3.10 A"/>
    <property type="chains" value="65/A8=1-112"/>
</dbReference>
<dbReference type="PDB" id="6UCQ">
    <property type="method" value="X-ray"/>
    <property type="resolution" value="3.50 A"/>
    <property type="chains" value="1S/2S=1-112"/>
</dbReference>
<dbReference type="PDB" id="6UO1">
    <property type="method" value="X-ray"/>
    <property type="resolution" value="2.95 A"/>
    <property type="chains" value="1S/2S=1-112"/>
</dbReference>
<dbReference type="PDB" id="6XHV">
    <property type="method" value="X-ray"/>
    <property type="resolution" value="2.40 A"/>
    <property type="chains" value="1S/2S=1-112"/>
</dbReference>
<dbReference type="PDB" id="6XHW">
    <property type="method" value="X-ray"/>
    <property type="resolution" value="2.50 A"/>
    <property type="chains" value="1S/2S=1-112"/>
</dbReference>
<dbReference type="PDB" id="6XHX">
    <property type="method" value="X-ray"/>
    <property type="resolution" value="2.55 A"/>
    <property type="chains" value="1S/2S=1-112"/>
</dbReference>
<dbReference type="PDB" id="6XHY">
    <property type="method" value="X-ray"/>
    <property type="resolution" value="2.60 A"/>
    <property type="chains" value="1S/2S=1-112"/>
</dbReference>
<dbReference type="PDB" id="6XQD">
    <property type="method" value="X-ray"/>
    <property type="resolution" value="2.80 A"/>
    <property type="chains" value="1S/2S=1-112"/>
</dbReference>
<dbReference type="PDB" id="6XQE">
    <property type="method" value="X-ray"/>
    <property type="resolution" value="3.00 A"/>
    <property type="chains" value="1S/2S=1-112"/>
</dbReference>
<dbReference type="PDB" id="7AZO">
    <property type="method" value="X-ray"/>
    <property type="resolution" value="3.30 A"/>
    <property type="chains" value="L18A/L18B=1-112"/>
</dbReference>
<dbReference type="PDB" id="7AZS">
    <property type="method" value="X-ray"/>
    <property type="resolution" value="3.10 A"/>
    <property type="chains" value="L18A/L18B=1-112"/>
</dbReference>
<dbReference type="PDB" id="7JQL">
    <property type="method" value="X-ray"/>
    <property type="resolution" value="3.00 A"/>
    <property type="chains" value="1S/2S=1-112"/>
</dbReference>
<dbReference type="PDB" id="7JQM">
    <property type="method" value="X-ray"/>
    <property type="resolution" value="3.05 A"/>
    <property type="chains" value="1S/2S=1-112"/>
</dbReference>
<dbReference type="PDB" id="7LH5">
    <property type="method" value="X-ray"/>
    <property type="resolution" value="3.27 A"/>
    <property type="chains" value="BS/DS=1-112"/>
</dbReference>
<dbReference type="PDB" id="7MD7">
    <property type="method" value="X-ray"/>
    <property type="resolution" value="2.80 A"/>
    <property type="chains" value="1S/2S=1-112"/>
</dbReference>
<dbReference type="PDB" id="7RQ8">
    <property type="method" value="X-ray"/>
    <property type="resolution" value="2.50 A"/>
    <property type="chains" value="1S/2S=1-112"/>
</dbReference>
<dbReference type="PDB" id="7RQ9">
    <property type="method" value="X-ray"/>
    <property type="resolution" value="2.60 A"/>
    <property type="chains" value="1S/2S=1-112"/>
</dbReference>
<dbReference type="PDB" id="7RQA">
    <property type="method" value="X-ray"/>
    <property type="resolution" value="2.40 A"/>
    <property type="chains" value="1S/2S=1-112"/>
</dbReference>
<dbReference type="PDB" id="7RQB">
    <property type="method" value="X-ray"/>
    <property type="resolution" value="2.45 A"/>
    <property type="chains" value="1S/2S=1-112"/>
</dbReference>
<dbReference type="PDB" id="7RQC">
    <property type="method" value="X-ray"/>
    <property type="resolution" value="2.50 A"/>
    <property type="chains" value="1S/2S=1-112"/>
</dbReference>
<dbReference type="PDB" id="7RQD">
    <property type="method" value="X-ray"/>
    <property type="resolution" value="2.50 A"/>
    <property type="chains" value="1S/2S=1-112"/>
</dbReference>
<dbReference type="PDB" id="7RQE">
    <property type="method" value="X-ray"/>
    <property type="resolution" value="2.40 A"/>
    <property type="chains" value="1S/2S=1-112"/>
</dbReference>
<dbReference type="PDB" id="7U2H">
    <property type="method" value="X-ray"/>
    <property type="resolution" value="2.55 A"/>
    <property type="chains" value="1S/2S=1-112"/>
</dbReference>
<dbReference type="PDB" id="7U2I">
    <property type="method" value="X-ray"/>
    <property type="resolution" value="2.55 A"/>
    <property type="chains" value="1S/2S=1-112"/>
</dbReference>
<dbReference type="PDB" id="7U2J">
    <property type="method" value="X-ray"/>
    <property type="resolution" value="2.55 A"/>
    <property type="chains" value="1S/2S=1-112"/>
</dbReference>
<dbReference type="PDB" id="8CVJ">
    <property type="method" value="X-ray"/>
    <property type="resolution" value="2.40 A"/>
    <property type="chains" value="1S/2S=1-112"/>
</dbReference>
<dbReference type="PDB" id="8CVK">
    <property type="method" value="X-ray"/>
    <property type="resolution" value="2.50 A"/>
    <property type="chains" value="1S/2S=1-112"/>
</dbReference>
<dbReference type="PDB" id="8CVL">
    <property type="method" value="X-ray"/>
    <property type="resolution" value="2.30 A"/>
    <property type="chains" value="1S/2S=1-112"/>
</dbReference>
<dbReference type="PDB" id="8EKB">
    <property type="method" value="X-ray"/>
    <property type="resolution" value="2.70 A"/>
    <property type="chains" value="1S/2S=1-112"/>
</dbReference>
<dbReference type="PDB" id="8EV6">
    <property type="method" value="X-ray"/>
    <property type="resolution" value="2.95 A"/>
    <property type="chains" value="1S/2S=1-112"/>
</dbReference>
<dbReference type="PDB" id="8EV7">
    <property type="method" value="X-ray"/>
    <property type="resolution" value="2.89 A"/>
    <property type="chains" value="1S/2S=1-112"/>
</dbReference>
<dbReference type="PDB" id="8FC1">
    <property type="method" value="X-ray"/>
    <property type="resolution" value="2.50 A"/>
    <property type="chains" value="1S/2S=1-112"/>
</dbReference>
<dbReference type="PDB" id="8FC2">
    <property type="method" value="X-ray"/>
    <property type="resolution" value="2.50 A"/>
    <property type="chains" value="1S/2S=1-112"/>
</dbReference>
<dbReference type="PDB" id="8FC3">
    <property type="method" value="X-ray"/>
    <property type="resolution" value="2.60 A"/>
    <property type="chains" value="1S/2S=1-112"/>
</dbReference>
<dbReference type="PDB" id="8FC4">
    <property type="method" value="X-ray"/>
    <property type="resolution" value="2.45 A"/>
    <property type="chains" value="1S/2S=1-112"/>
</dbReference>
<dbReference type="PDB" id="8FC5">
    <property type="method" value="X-ray"/>
    <property type="resolution" value="2.65 A"/>
    <property type="chains" value="1S/2S=1-112"/>
</dbReference>
<dbReference type="PDB" id="8FC6">
    <property type="method" value="X-ray"/>
    <property type="resolution" value="2.35 A"/>
    <property type="chains" value="1S/2S=1-112"/>
</dbReference>
<dbReference type="PDB" id="8FOM">
    <property type="method" value="X-ray"/>
    <property type="resolution" value="3.58 A"/>
    <property type="chains" value="RS/YS=1-112"/>
</dbReference>
<dbReference type="PDB" id="8FON">
    <property type="method" value="X-ray"/>
    <property type="resolution" value="3.64 A"/>
    <property type="chains" value="RS/YS=1-112"/>
</dbReference>
<dbReference type="PDB" id="8G29">
    <property type="method" value="X-ray"/>
    <property type="resolution" value="2.55 A"/>
    <property type="chains" value="1S/2S=1-112"/>
</dbReference>
<dbReference type="PDB" id="8G2A">
    <property type="method" value="X-ray"/>
    <property type="resolution" value="2.45 A"/>
    <property type="chains" value="1S/2S=1-112"/>
</dbReference>
<dbReference type="PDB" id="8G2B">
    <property type="method" value="X-ray"/>
    <property type="resolution" value="2.55 A"/>
    <property type="chains" value="1S/2S=1-112"/>
</dbReference>
<dbReference type="PDB" id="8G2C">
    <property type="method" value="X-ray"/>
    <property type="resolution" value="2.65 A"/>
    <property type="chains" value="1S/2S=1-112"/>
</dbReference>
<dbReference type="PDB" id="8G2D">
    <property type="method" value="X-ray"/>
    <property type="resolution" value="2.70 A"/>
    <property type="chains" value="1S/2S=1-112"/>
</dbReference>
<dbReference type="PDB" id="8T8B">
    <property type="method" value="X-ray"/>
    <property type="resolution" value="2.65 A"/>
    <property type="chains" value="1S/2S=1-112"/>
</dbReference>
<dbReference type="PDB" id="8T8C">
    <property type="method" value="X-ray"/>
    <property type="resolution" value="2.60 A"/>
    <property type="chains" value="1S/2S=1-112"/>
</dbReference>
<dbReference type="PDB" id="8UD6">
    <property type="method" value="X-ray"/>
    <property type="resolution" value="2.70 A"/>
    <property type="chains" value="1S/2S=1-112"/>
</dbReference>
<dbReference type="PDB" id="8UD7">
    <property type="method" value="X-ray"/>
    <property type="resolution" value="2.55 A"/>
    <property type="chains" value="1S/2S=1-112"/>
</dbReference>
<dbReference type="PDB" id="8UD8">
    <property type="method" value="X-ray"/>
    <property type="resolution" value="2.60 A"/>
    <property type="chains" value="1S/2S=1-112"/>
</dbReference>
<dbReference type="PDB" id="8UVR">
    <property type="method" value="X-ray"/>
    <property type="resolution" value="2.60 A"/>
    <property type="chains" value="1S/2S=1-112"/>
</dbReference>
<dbReference type="PDB" id="8UVS">
    <property type="method" value="X-ray"/>
    <property type="resolution" value="2.75 A"/>
    <property type="chains" value="1S/2S=1-112"/>
</dbReference>
<dbReference type="PDB" id="8VTU">
    <property type="method" value="X-ray"/>
    <property type="resolution" value="2.40 A"/>
    <property type="chains" value="1S/2S=1-112"/>
</dbReference>
<dbReference type="PDB" id="8VTV">
    <property type="method" value="X-ray"/>
    <property type="resolution" value="2.55 A"/>
    <property type="chains" value="1S/2S=1-112"/>
</dbReference>
<dbReference type="PDB" id="8VTW">
    <property type="method" value="X-ray"/>
    <property type="resolution" value="2.35 A"/>
    <property type="chains" value="1S/2S=1-112"/>
</dbReference>
<dbReference type="PDB" id="8VTX">
    <property type="method" value="X-ray"/>
    <property type="resolution" value="2.40 A"/>
    <property type="chains" value="1S/2S=1-112"/>
</dbReference>
<dbReference type="PDB" id="8VTY">
    <property type="method" value="X-ray"/>
    <property type="resolution" value="2.60 A"/>
    <property type="chains" value="1S/2S=1-112"/>
</dbReference>
<dbReference type="PDB" id="8WV1">
    <property type="method" value="X-ray"/>
    <property type="resolution" value="3.99 A"/>
    <property type="chains" value="N/n=1-112"/>
</dbReference>
<dbReference type="PDB" id="9B00">
    <property type="method" value="X-ray"/>
    <property type="resolution" value="2.80 A"/>
    <property type="chains" value="1S/2S=1-112"/>
</dbReference>
<dbReference type="PDB" id="9D0J">
    <property type="method" value="X-ray"/>
    <property type="resolution" value="2.50 A"/>
    <property type="chains" value="1S/2S=1-112"/>
</dbReference>
<dbReference type="PDB" id="9D7R">
    <property type="method" value="X-ray"/>
    <property type="resolution" value="2.70 A"/>
    <property type="chains" value="1S/2S=1-112"/>
</dbReference>
<dbReference type="PDB" id="9D7S">
    <property type="method" value="X-ray"/>
    <property type="resolution" value="2.85 A"/>
    <property type="chains" value="1S/2S=1-112"/>
</dbReference>
<dbReference type="PDB" id="9D7T">
    <property type="method" value="X-ray"/>
    <property type="resolution" value="2.70 A"/>
    <property type="chains" value="1S/2S=1-112"/>
</dbReference>
<dbReference type="PDB" id="9DFC">
    <property type="method" value="X-ray"/>
    <property type="resolution" value="2.50 A"/>
    <property type="chains" value="1S/2S=1-112"/>
</dbReference>
<dbReference type="PDB" id="9DFD">
    <property type="method" value="X-ray"/>
    <property type="resolution" value="2.60 A"/>
    <property type="chains" value="1S/2S=1-112"/>
</dbReference>
<dbReference type="PDB" id="9DFE">
    <property type="method" value="X-ray"/>
    <property type="resolution" value="2.60 A"/>
    <property type="chains" value="1S/2S=1-112"/>
</dbReference>
<dbReference type="PDBsum" id="1VVJ"/>
<dbReference type="PDBsum" id="1VY4"/>
<dbReference type="PDBsum" id="1VY5"/>
<dbReference type="PDBsum" id="1VY6"/>
<dbReference type="PDBsum" id="1VY7"/>
<dbReference type="PDBsum" id="4L47"/>
<dbReference type="PDBsum" id="4L71"/>
<dbReference type="PDBsum" id="4LEL"/>
<dbReference type="PDBsum" id="4LFZ"/>
<dbReference type="PDBsum" id="4LNT"/>
<dbReference type="PDBsum" id="4LSK"/>
<dbReference type="PDBsum" id="4LT8"/>
<dbReference type="PDBsum" id="4P6F"/>
<dbReference type="PDBsum" id="4P70"/>
<dbReference type="PDBsum" id="4TUA"/>
<dbReference type="PDBsum" id="4TUB"/>
<dbReference type="PDBsum" id="4TUC"/>
<dbReference type="PDBsum" id="4TUD"/>
<dbReference type="PDBsum" id="4TUE"/>
<dbReference type="PDBsum" id="4V42"/>
<dbReference type="PDBsum" id="4V4P"/>
<dbReference type="PDBsum" id="4V4X"/>
<dbReference type="PDBsum" id="4V4Y"/>
<dbReference type="PDBsum" id="4V4Z"/>
<dbReference type="PDBsum" id="4V51"/>
<dbReference type="PDBsum" id="4V5A"/>
<dbReference type="PDBsum" id="4V5C"/>
<dbReference type="PDBsum" id="4V5D"/>
<dbReference type="PDBsum" id="4V5E"/>
<dbReference type="PDBsum" id="4V5F"/>
<dbReference type="PDBsum" id="4V5G"/>
<dbReference type="PDBsum" id="4V5J"/>
<dbReference type="PDBsum" id="4V5K"/>
<dbReference type="PDBsum" id="4V5L"/>
<dbReference type="PDBsum" id="4V5M"/>
<dbReference type="PDBsum" id="4V5N"/>
<dbReference type="PDBsum" id="4V5P"/>
<dbReference type="PDBsum" id="4V5Q"/>
<dbReference type="PDBsum" id="4V5R"/>
<dbReference type="PDBsum" id="4V5S"/>
<dbReference type="PDBsum" id="4V68"/>
<dbReference type="PDBsum" id="4V6A"/>
<dbReference type="PDBsum" id="4V6F"/>
<dbReference type="PDBsum" id="4V6G"/>
<dbReference type="PDBsum" id="4V7J"/>
<dbReference type="PDBsum" id="4V7K"/>
<dbReference type="PDBsum" id="4V7L"/>
<dbReference type="PDBsum" id="4V7M"/>
<dbReference type="PDBsum" id="4V7W"/>
<dbReference type="PDBsum" id="4V7X"/>
<dbReference type="PDBsum" id="4V7Y"/>
<dbReference type="PDBsum" id="4V7Z"/>
<dbReference type="PDBsum" id="4V87"/>
<dbReference type="PDBsum" id="4V8A"/>
<dbReference type="PDBsum" id="4V8B"/>
<dbReference type="PDBsum" id="4V8C"/>
<dbReference type="PDBsum" id="4V8D"/>
<dbReference type="PDBsum" id="4V8E"/>
<dbReference type="PDBsum" id="4V8F"/>
<dbReference type="PDBsum" id="4V8G"/>
<dbReference type="PDBsum" id="4V8H"/>
<dbReference type="PDBsum" id="4V8I"/>
<dbReference type="PDBsum" id="4V8J"/>
<dbReference type="PDBsum" id="4V8N"/>
<dbReference type="PDBsum" id="4V8O"/>
<dbReference type="PDBsum" id="4V8Q"/>
<dbReference type="PDBsum" id="4V8U"/>
<dbReference type="PDBsum" id="4V8X"/>
<dbReference type="PDBsum" id="4V90"/>
<dbReference type="PDBsum" id="4V95"/>
<dbReference type="PDBsum" id="4V97"/>
<dbReference type="PDBsum" id="4V9A"/>
<dbReference type="PDBsum" id="4V9B"/>
<dbReference type="PDBsum" id="4V9H"/>
<dbReference type="PDBsum" id="4V9I"/>
<dbReference type="PDBsum" id="4V9R"/>
<dbReference type="PDBsum" id="4V9S"/>
<dbReference type="PDBsum" id="4W2E"/>
<dbReference type="PDBsum" id="4W2F"/>
<dbReference type="PDBsum" id="4W2G"/>
<dbReference type="PDBsum" id="4W2H"/>
<dbReference type="PDBsum" id="4W2I"/>
<dbReference type="PDBsum" id="4W4G"/>
<dbReference type="PDBsum" id="4WPO"/>
<dbReference type="PDBsum" id="4WQ1"/>
<dbReference type="PDBsum" id="4WQF"/>
<dbReference type="PDBsum" id="4WQR"/>
<dbReference type="PDBsum" id="4WQU"/>
<dbReference type="PDBsum" id="4WQY"/>
<dbReference type="PDBsum" id="4WR6"/>
<dbReference type="PDBsum" id="4WRA"/>
<dbReference type="PDBsum" id="4WRO"/>
<dbReference type="PDBsum" id="4WSD"/>
<dbReference type="PDBsum" id="4WSM"/>
<dbReference type="PDBsum" id="4WT1"/>
<dbReference type="PDBsum" id="4WT8"/>
<dbReference type="PDBsum" id="4WU1"/>
<dbReference type="PDBsum" id="4WZD"/>
<dbReference type="PDBsum" id="4WZO"/>
<dbReference type="PDBsum" id="4Y4O"/>
<dbReference type="PDBsum" id="4Y4P"/>
<dbReference type="PDBsum" id="4YPB"/>
<dbReference type="PDBsum" id="4YZV"/>
<dbReference type="PDBsum" id="4Z3S"/>
<dbReference type="PDBsum" id="4Z8C"/>
<dbReference type="PDBsum" id="4ZER"/>
<dbReference type="PDBsum" id="4ZSN"/>
<dbReference type="PDBsum" id="5A9Z"/>
<dbReference type="PDBsum" id="5AA0"/>
<dbReference type="PDBsum" id="5CZP"/>
<dbReference type="PDBsum" id="5D8B"/>
<dbReference type="PDBsum" id="5DFE"/>
<dbReference type="PDBsum" id="5DOX"/>
<dbReference type="PDBsum" id="5DOY"/>
<dbReference type="PDBsum" id="5E7K"/>
<dbReference type="PDBsum" id="5E81"/>
<dbReference type="PDBsum" id="5EL4"/>
<dbReference type="PDBsum" id="5EL5"/>
<dbReference type="PDBsum" id="5EL6"/>
<dbReference type="PDBsum" id="5EL7"/>
<dbReference type="PDBsum" id="5F8K"/>
<dbReference type="PDBsum" id="5FDU"/>
<dbReference type="PDBsum" id="5FDV"/>
<dbReference type="PDBsum" id="5HAU"/>
<dbReference type="PDBsum" id="5HCP"/>
<dbReference type="PDBsum" id="5HCQ"/>
<dbReference type="PDBsum" id="5HCR"/>
<dbReference type="PDBsum" id="5HD1"/>
<dbReference type="PDBsum" id="5IB7"/>
<dbReference type="PDBsum" id="5IB8"/>
<dbReference type="PDBsum" id="5IBB"/>
<dbReference type="PDBsum" id="5IMQ"/>
<dbReference type="PDBsum" id="5IMR"/>
<dbReference type="PDBsum" id="5J30"/>
<dbReference type="PDBsum" id="5J3C"/>
<dbReference type="PDBsum" id="5J4B"/>
<dbReference type="PDBsum" id="5J4C"/>
<dbReference type="PDBsum" id="5J8B"/>
<dbReference type="PDBsum" id="5NDJ"/>
<dbReference type="PDBsum" id="5NDK"/>
<dbReference type="PDBsum" id="5OT7"/>
<dbReference type="PDBsum" id="5UQ7"/>
<dbReference type="PDBsum" id="5UQ8"/>
<dbReference type="PDBsum" id="5VP2"/>
<dbReference type="PDBsum" id="5VPO"/>
<dbReference type="PDBsum" id="5VPP"/>
<dbReference type="PDBsum" id="5W4K"/>
<dbReference type="PDBsum" id="5WIS"/>
<dbReference type="PDBsum" id="5WIT"/>
<dbReference type="PDBsum" id="5ZLU"/>
<dbReference type="PDBsum" id="6BUW"/>
<dbReference type="PDBsum" id="6BZ6"/>
<dbReference type="PDBsum" id="6BZ7"/>
<dbReference type="PDBsum" id="6BZ8"/>
<dbReference type="PDBsum" id="6C5L"/>
<dbReference type="PDBsum" id="6CAE"/>
<dbReference type="PDBsum" id="6CFJ"/>
<dbReference type="PDBsum" id="6CFK"/>
<dbReference type="PDBsum" id="6CFL"/>
<dbReference type="PDBsum" id="6CZR"/>
<dbReference type="PDBsum" id="6FKR"/>
<dbReference type="PDBsum" id="6GSJ"/>
<dbReference type="PDBsum" id="6GSK"/>
<dbReference type="PDBsum" id="6GSL"/>
<dbReference type="PDBsum" id="6GZQ"/>
<dbReference type="PDBsum" id="6GZX"/>
<dbReference type="PDBsum" id="6GZZ"/>
<dbReference type="PDBsum" id="6N9E"/>
<dbReference type="PDBsum" id="6N9F"/>
<dbReference type="PDBsum" id="6ND5"/>
<dbReference type="PDBsum" id="6ND6"/>
<dbReference type="PDBsum" id="6NDK"/>
<dbReference type="PDBsum" id="6NSH"/>
<dbReference type="PDBsum" id="6NTA"/>
<dbReference type="PDBsum" id="6NUO"/>
<dbReference type="PDBsum" id="6NWY"/>
<dbReference type="PDBsum" id="6O3M"/>
<dbReference type="PDBsum" id="6O97"/>
<dbReference type="PDBsum" id="6OF1"/>
<dbReference type="PDBsum" id="6OF6"/>
<dbReference type="PDBsum" id="6OJ2"/>
<dbReference type="PDBsum" id="6OPE"/>
<dbReference type="PDBsum" id="6ORD"/>
<dbReference type="PDBsum" id="6OSI"/>
<dbReference type="PDBsum" id="6OTR"/>
<dbReference type="PDBsum" id="6OXA"/>
<dbReference type="PDBsum" id="6OXI"/>
<dbReference type="PDBsum" id="6Q95"/>
<dbReference type="PDBsum" id="6QNQ"/>
<dbReference type="PDBsum" id="6QNR"/>
<dbReference type="PDBsum" id="6UCQ"/>
<dbReference type="PDBsum" id="6UO1"/>
<dbReference type="PDBsum" id="6XHV"/>
<dbReference type="PDBsum" id="6XHW"/>
<dbReference type="PDBsum" id="6XHX"/>
<dbReference type="PDBsum" id="6XHY"/>
<dbReference type="PDBsum" id="6XQD"/>
<dbReference type="PDBsum" id="6XQE"/>
<dbReference type="PDBsum" id="7AZO"/>
<dbReference type="PDBsum" id="7AZS"/>
<dbReference type="PDBsum" id="7JQL"/>
<dbReference type="PDBsum" id="7JQM"/>
<dbReference type="PDBsum" id="7LH5"/>
<dbReference type="PDBsum" id="7MD7"/>
<dbReference type="PDBsum" id="7RQ8"/>
<dbReference type="PDBsum" id="7RQ9"/>
<dbReference type="PDBsum" id="7RQA"/>
<dbReference type="PDBsum" id="7RQB"/>
<dbReference type="PDBsum" id="7RQC"/>
<dbReference type="PDBsum" id="7RQD"/>
<dbReference type="PDBsum" id="7RQE"/>
<dbReference type="PDBsum" id="7U2H"/>
<dbReference type="PDBsum" id="7U2I"/>
<dbReference type="PDBsum" id="7U2J"/>
<dbReference type="PDBsum" id="8CVJ"/>
<dbReference type="PDBsum" id="8CVK"/>
<dbReference type="PDBsum" id="8CVL"/>
<dbReference type="PDBsum" id="8EKB"/>
<dbReference type="PDBsum" id="8EV6"/>
<dbReference type="PDBsum" id="8EV7"/>
<dbReference type="PDBsum" id="8FC1"/>
<dbReference type="PDBsum" id="8FC2"/>
<dbReference type="PDBsum" id="8FC3"/>
<dbReference type="PDBsum" id="8FC4"/>
<dbReference type="PDBsum" id="8FC5"/>
<dbReference type="PDBsum" id="8FC6"/>
<dbReference type="PDBsum" id="8FOM"/>
<dbReference type="PDBsum" id="8FON"/>
<dbReference type="PDBsum" id="8G29"/>
<dbReference type="PDBsum" id="8G2A"/>
<dbReference type="PDBsum" id="8G2B"/>
<dbReference type="PDBsum" id="8G2C"/>
<dbReference type="PDBsum" id="8G2D"/>
<dbReference type="PDBsum" id="8T8B"/>
<dbReference type="PDBsum" id="8T8C"/>
<dbReference type="PDBsum" id="8UD6"/>
<dbReference type="PDBsum" id="8UD7"/>
<dbReference type="PDBsum" id="8UD8"/>
<dbReference type="PDBsum" id="8UVR"/>
<dbReference type="PDBsum" id="8UVS"/>
<dbReference type="PDBsum" id="8VTU"/>
<dbReference type="PDBsum" id="8VTV"/>
<dbReference type="PDBsum" id="8VTW"/>
<dbReference type="PDBsum" id="8VTX"/>
<dbReference type="PDBsum" id="8VTY"/>
<dbReference type="PDBsum" id="8WV1"/>
<dbReference type="PDBsum" id="9B00"/>
<dbReference type="PDBsum" id="9D0J"/>
<dbReference type="PDBsum" id="9D7R"/>
<dbReference type="PDBsum" id="9D7S"/>
<dbReference type="PDBsum" id="9D7T"/>
<dbReference type="PDBsum" id="9DFC"/>
<dbReference type="PDBsum" id="9DFD"/>
<dbReference type="PDBsum" id="9DFE"/>
<dbReference type="BMRB" id="Q5SHQ4"/>
<dbReference type="EMDB" id="EMD-0101"/>
<dbReference type="EMDB" id="EMD-0104"/>
<dbReference type="EMDB" id="EMD-0105"/>
<dbReference type="EMDB" id="EMD-3852"/>
<dbReference type="EMDB" id="EMD-4475"/>
<dbReference type="EMDB" id="EMD-6934"/>
<dbReference type="EMDB" id="EMD-8596"/>
<dbReference type="EMDB" id="EMD-8597"/>
<dbReference type="SMR" id="Q5SHQ4"/>
<dbReference type="IntAct" id="Q5SHQ4">
    <property type="interactions" value="8"/>
</dbReference>
<dbReference type="EnsemblBacteria" id="BAD71499">
    <property type="protein sequence ID" value="BAD71499"/>
    <property type="gene ID" value="BAD71499"/>
</dbReference>
<dbReference type="GeneID" id="3169978"/>
<dbReference type="KEGG" id="ttj:TTHA1676"/>
<dbReference type="PATRIC" id="fig|300852.9.peg.1646"/>
<dbReference type="eggNOG" id="COG0256">
    <property type="taxonomic scope" value="Bacteria"/>
</dbReference>
<dbReference type="HOGENOM" id="CLU_098841_0_1_0"/>
<dbReference type="PhylomeDB" id="Q5SHQ4"/>
<dbReference type="Proteomes" id="UP000000532">
    <property type="component" value="Chromosome"/>
</dbReference>
<dbReference type="GO" id="GO:0022625">
    <property type="term" value="C:cytosolic large ribosomal subunit"/>
    <property type="evidence" value="ECO:0007669"/>
    <property type="project" value="TreeGrafter"/>
</dbReference>
<dbReference type="GO" id="GO:0008097">
    <property type="term" value="F:5S rRNA binding"/>
    <property type="evidence" value="ECO:0007669"/>
    <property type="project" value="TreeGrafter"/>
</dbReference>
<dbReference type="GO" id="GO:0003735">
    <property type="term" value="F:structural constituent of ribosome"/>
    <property type="evidence" value="ECO:0007669"/>
    <property type="project" value="InterPro"/>
</dbReference>
<dbReference type="GO" id="GO:0006412">
    <property type="term" value="P:translation"/>
    <property type="evidence" value="ECO:0007669"/>
    <property type="project" value="UniProtKB-UniRule"/>
</dbReference>
<dbReference type="CDD" id="cd00432">
    <property type="entry name" value="Ribosomal_L18_L5e"/>
    <property type="match status" value="1"/>
</dbReference>
<dbReference type="FunFam" id="3.30.420.100:FF:000001">
    <property type="entry name" value="50S ribosomal protein L18"/>
    <property type="match status" value="1"/>
</dbReference>
<dbReference type="Gene3D" id="3.30.420.100">
    <property type="match status" value="1"/>
</dbReference>
<dbReference type="HAMAP" id="MF_01337_B">
    <property type="entry name" value="Ribosomal_uL18_B"/>
    <property type="match status" value="1"/>
</dbReference>
<dbReference type="InterPro" id="IPR004389">
    <property type="entry name" value="Ribosomal_uL18_bac-type"/>
</dbReference>
<dbReference type="InterPro" id="IPR005484">
    <property type="entry name" value="Ribosomal_uL18_bac/euk"/>
</dbReference>
<dbReference type="NCBIfam" id="TIGR00060">
    <property type="entry name" value="L18_bact"/>
    <property type="match status" value="1"/>
</dbReference>
<dbReference type="PANTHER" id="PTHR12899">
    <property type="entry name" value="39S RIBOSOMAL PROTEIN L18, MITOCHONDRIAL"/>
    <property type="match status" value="1"/>
</dbReference>
<dbReference type="PANTHER" id="PTHR12899:SF3">
    <property type="entry name" value="LARGE RIBOSOMAL SUBUNIT PROTEIN UL18M"/>
    <property type="match status" value="1"/>
</dbReference>
<dbReference type="Pfam" id="PF00861">
    <property type="entry name" value="Ribosomal_L18p"/>
    <property type="match status" value="1"/>
</dbReference>
<dbReference type="SUPFAM" id="SSF53137">
    <property type="entry name" value="Translational machinery components"/>
    <property type="match status" value="1"/>
</dbReference>
<organism>
    <name type="scientific">Thermus thermophilus (strain ATCC 27634 / DSM 579 / HB8)</name>
    <dbReference type="NCBI Taxonomy" id="300852"/>
    <lineage>
        <taxon>Bacteria</taxon>
        <taxon>Thermotogati</taxon>
        <taxon>Deinococcota</taxon>
        <taxon>Deinococci</taxon>
        <taxon>Thermales</taxon>
        <taxon>Thermaceae</taxon>
        <taxon>Thermus</taxon>
    </lineage>
</organism>
<feature type="initiator methionine" description="Removed" evidence="1 3 4">
    <location>
        <position position="1"/>
    </location>
</feature>
<feature type="chain" id="PRO_0000131372" description="Large ribosomal subunit protein uL18">
    <location>
        <begin position="2"/>
        <end position="112"/>
    </location>
</feature>
<feature type="helix" evidence="7">
    <location>
        <begin position="16"/>
        <end position="19"/>
    </location>
</feature>
<feature type="strand" evidence="7">
    <location>
        <begin position="25"/>
        <end position="30"/>
    </location>
</feature>
<feature type="strand" evidence="7">
    <location>
        <begin position="35"/>
        <end position="41"/>
    </location>
</feature>
<feature type="turn" evidence="7">
    <location>
        <begin position="42"/>
        <end position="45"/>
    </location>
</feature>
<feature type="strand" evidence="7">
    <location>
        <begin position="46"/>
        <end position="51"/>
    </location>
</feature>
<feature type="helix" evidence="7">
    <location>
        <begin position="54"/>
        <end position="56"/>
    </location>
</feature>
<feature type="helix" evidence="7">
    <location>
        <begin position="63"/>
        <end position="79"/>
    </location>
</feature>
<feature type="strand" evidence="7">
    <location>
        <begin position="102"/>
        <end position="104"/>
    </location>
</feature>
<sequence>MARLTAYERRKFRVRNRIKRTGRLRLSVFRSLKHIYAQIIDDEKGVTLVSASSLALKLKGNKTEVARQVGRALAEKALALGIKQVAFDRGPYKYHGRVKALAEGAREGGLEF</sequence>
<accession>Q5SHQ4</accession>
<proteinExistence type="evidence at protein level"/>
<gene>
    <name type="primary">rplR</name>
    <name type="ordered locus">TTHA1676</name>
</gene>
<protein>
    <recommendedName>
        <fullName evidence="6">Large ribosomal subunit protein uL18</fullName>
    </recommendedName>
    <alternativeName>
        <fullName>50S ribosomal protein L18</fullName>
    </alternativeName>
    <alternativeName>
        <fullName evidence="5">TL24</fullName>
    </alternativeName>
</protein>